<feature type="chain" id="PRO_0000314819" description="DIS3-like exonuclease 2">
    <location>
        <begin position="1"/>
        <end position="834"/>
    </location>
</feature>
<feature type="region of interest" description="Disordered" evidence="2">
    <location>
        <begin position="1"/>
        <end position="35"/>
    </location>
</feature>
<feature type="compositionally biased region" description="Polar residues" evidence="2">
    <location>
        <begin position="1"/>
        <end position="23"/>
    </location>
</feature>
<feature type="binding site" evidence="1">
    <location>
        <position position="354"/>
    </location>
    <ligand>
        <name>Mg(2+)</name>
        <dbReference type="ChEBI" id="CHEBI:18420"/>
    </ligand>
</feature>
<feature type="binding site" evidence="1">
    <location>
        <position position="363"/>
    </location>
    <ligand>
        <name>Mg(2+)</name>
        <dbReference type="ChEBI" id="CHEBI:18420"/>
    </ligand>
</feature>
<feature type="site" description="Important for catalytic activity" evidence="1">
    <location>
        <position position="362"/>
    </location>
</feature>
<feature type="sequence conflict" description="In Ref. 2; AAI21426." evidence="3" ref="2">
    <original>S</original>
    <variation>T</variation>
    <location>
        <position position="606"/>
    </location>
</feature>
<accession>Q0V9R3</accession>
<accession>F6YSH4</accession>
<name>DI3L2_XENTR</name>
<sequence>MHNSEFLSPVQSGTQRGTNRSILNNKKSGKGKKKSVFEAYMTKEEVSAGLKRGELIQGPLRINPKKFHEAYLPSPDGVRDLFIDGVVPRNRALNGDVVVVKLLPQEQWKVLKNDVCEDDDTPGHSTGNKQHALSPHLMKSSAKNPDLIIEAKVDSSAEDGHESALIGCLQKEIKDQDKLGAIEEKTSKQGDPKTFSDDCFQKTAKVVYILEKKHSRAATGFIKPLSDKSSDLARKRALFSPVDHRLPRIYVPLGDCPHDFAIHPETYANTLFICSITAWRDDSNFAEGKLMKSLGQAGEIEPETEGILVEYGVDFSDFPDKVLQCLPQDLPWTIPQEEFQKRKDLRNECIFTIDPATARDLDDALSCKPLPDGNFEVGVHIADVSYFVAEGSALDIMASERATSVYLVQKVIPMLPRLLCEELCSLNPMTDRLTFSVIWKITPQGEILDEWFGRSVICSCVKLSYDHAQNMINHPDKKIEQHELPPVSPQHTINEIHQAVLNLHLIAQNLRKQRFDDGALRLDQLKLTFTLDKESGLPQGCYIYQYRDSNKLVEEFMLLANMAVAHHIYRRFPEEALLRRHPPPQTKMLNDLIEFCDQMGLQLDFSSSGTLHKSLNDQFETDEYSAARKEVLTNMCSRPMQMAVYFCTGALKDETLFHHYALNVPLYTHFTSPIRRFADVIVHRLLAASLGCGPPLKMPKEVIQKQADHCNDRKTASKRVQELSAELFFSVFVKECGPLESEAMVMGVLNEAFDVIVLRFGVQKRIYCNSLPLVNSHFQQVGKRPELTLLWEPEKKGEEPVRQVISIFTLVEVVLKSDNVPLKYTAVLKSPEAQ</sequence>
<protein>
    <recommendedName>
        <fullName evidence="1">DIS3-like exonuclease 2</fullName>
        <ecNumber evidence="1">3.1.13.-</ecNumber>
    </recommendedName>
</protein>
<evidence type="ECO:0000255" key="1">
    <source>
        <dbReference type="HAMAP-Rule" id="MF_03045"/>
    </source>
</evidence>
<evidence type="ECO:0000256" key="2">
    <source>
        <dbReference type="SAM" id="MobiDB-lite"/>
    </source>
</evidence>
<evidence type="ECO:0000305" key="3"/>
<reference key="1">
    <citation type="journal article" date="2010" name="Science">
        <title>The genome of the Western clawed frog Xenopus tropicalis.</title>
        <authorList>
            <person name="Hellsten U."/>
            <person name="Harland R.M."/>
            <person name="Gilchrist M.J."/>
            <person name="Hendrix D."/>
            <person name="Jurka J."/>
            <person name="Kapitonov V."/>
            <person name="Ovcharenko I."/>
            <person name="Putnam N.H."/>
            <person name="Shu S."/>
            <person name="Taher L."/>
            <person name="Blitz I.L."/>
            <person name="Blumberg B."/>
            <person name="Dichmann D.S."/>
            <person name="Dubchak I."/>
            <person name="Amaya E."/>
            <person name="Detter J.C."/>
            <person name="Fletcher R."/>
            <person name="Gerhard D.S."/>
            <person name="Goodstein D."/>
            <person name="Graves T."/>
            <person name="Grigoriev I.V."/>
            <person name="Grimwood J."/>
            <person name="Kawashima T."/>
            <person name="Lindquist E."/>
            <person name="Lucas S.M."/>
            <person name="Mead P.E."/>
            <person name="Mitros T."/>
            <person name="Ogino H."/>
            <person name="Ohta Y."/>
            <person name="Poliakov A.V."/>
            <person name="Pollet N."/>
            <person name="Robert J."/>
            <person name="Salamov A."/>
            <person name="Sater A.K."/>
            <person name="Schmutz J."/>
            <person name="Terry A."/>
            <person name="Vize P.D."/>
            <person name="Warren W.C."/>
            <person name="Wells D."/>
            <person name="Wills A."/>
            <person name="Wilson R.K."/>
            <person name="Zimmerman L.B."/>
            <person name="Zorn A.M."/>
            <person name="Grainger R."/>
            <person name="Grammer T."/>
            <person name="Khokha M.K."/>
            <person name="Richardson P.M."/>
            <person name="Rokhsar D.S."/>
        </authorList>
    </citation>
    <scope>NUCLEOTIDE SEQUENCE [LARGE SCALE GENOMIC DNA]</scope>
</reference>
<reference key="2">
    <citation type="submission" date="2006-08" db="EMBL/GenBank/DDBJ databases">
        <authorList>
            <consortium name="NIH - Xenopus Gene Collection (XGC) project"/>
        </authorList>
    </citation>
    <scope>NUCLEOTIDE SEQUENCE [LARGE SCALE MRNA]</scope>
    <source>
        <tissue>Testis</tissue>
    </source>
</reference>
<gene>
    <name evidence="1" type="primary">dis3l2</name>
</gene>
<comment type="function">
    <text evidence="1">3'-5'-exoribonuclease that specifically recognizes RNAs polyuridylated at their 3' end and mediates their degradation. Component of an exosome-independent RNA degradation pathway that mediates degradation of both mRNAs and miRNAs that have been polyuridylated by a terminal uridylyltransferase. Essential for correct mitosis, and negatively regulates cell proliferation.</text>
</comment>
<comment type="cofactor">
    <cofactor evidence="1">
        <name>Mg(2+)</name>
        <dbReference type="ChEBI" id="CHEBI:18420"/>
    </cofactor>
    <cofactor evidence="1">
        <name>Mn(2+)</name>
        <dbReference type="ChEBI" id="CHEBI:29035"/>
    </cofactor>
</comment>
<comment type="subcellular location">
    <subcellularLocation>
        <location evidence="1">Cytoplasm</location>
    </subcellularLocation>
    <subcellularLocation>
        <location evidence="1">Cytoplasm</location>
        <location evidence="1">P-body</location>
    </subcellularLocation>
</comment>
<comment type="domain">
    <text evidence="1">Specifically recognizes and binds polyuridylated RNAs via 3 RNA-binding regions (named U-zone 1, U-zone 2 and U-zone 3) that form an open funnel on one face of the catalytic domain, allowing RNA to navigate a path to the active site.</text>
</comment>
<comment type="similarity">
    <text evidence="1">Belongs to the RNR ribonuclease family. DIS3L2 subfamily.</text>
</comment>
<keyword id="KW-0131">Cell cycle</keyword>
<keyword id="KW-0132">Cell division</keyword>
<keyword id="KW-0963">Cytoplasm</keyword>
<keyword id="KW-0269">Exonuclease</keyword>
<keyword id="KW-0378">Hydrolase</keyword>
<keyword id="KW-0460">Magnesium</keyword>
<keyword id="KW-0464">Manganese</keyword>
<keyword id="KW-0479">Metal-binding</keyword>
<keyword id="KW-0498">Mitosis</keyword>
<keyword id="KW-0540">Nuclease</keyword>
<keyword id="KW-1185">Reference proteome</keyword>
<keyword id="KW-0694">RNA-binding</keyword>
<keyword id="KW-0043">Tumor suppressor</keyword>
<organism>
    <name type="scientific">Xenopus tropicalis</name>
    <name type="common">Western clawed frog</name>
    <name type="synonym">Silurana tropicalis</name>
    <dbReference type="NCBI Taxonomy" id="8364"/>
    <lineage>
        <taxon>Eukaryota</taxon>
        <taxon>Metazoa</taxon>
        <taxon>Chordata</taxon>
        <taxon>Craniata</taxon>
        <taxon>Vertebrata</taxon>
        <taxon>Euteleostomi</taxon>
        <taxon>Amphibia</taxon>
        <taxon>Batrachia</taxon>
        <taxon>Anura</taxon>
        <taxon>Pipoidea</taxon>
        <taxon>Pipidae</taxon>
        <taxon>Xenopodinae</taxon>
        <taxon>Xenopus</taxon>
        <taxon>Silurana</taxon>
    </lineage>
</organism>
<proteinExistence type="evidence at transcript level"/>
<dbReference type="EC" id="3.1.13.-" evidence="1"/>
<dbReference type="EMBL" id="AAMC01069446">
    <property type="status" value="NOT_ANNOTATED_CDS"/>
    <property type="molecule type" value="Genomic_DNA"/>
</dbReference>
<dbReference type="EMBL" id="AAMC01069447">
    <property type="status" value="NOT_ANNOTATED_CDS"/>
    <property type="molecule type" value="Genomic_DNA"/>
</dbReference>
<dbReference type="EMBL" id="AAMC01069448">
    <property type="status" value="NOT_ANNOTATED_CDS"/>
    <property type="molecule type" value="Genomic_DNA"/>
</dbReference>
<dbReference type="EMBL" id="AAMC01069449">
    <property type="status" value="NOT_ANNOTATED_CDS"/>
    <property type="molecule type" value="Genomic_DNA"/>
</dbReference>
<dbReference type="EMBL" id="AAMC01069450">
    <property type="status" value="NOT_ANNOTATED_CDS"/>
    <property type="molecule type" value="Genomic_DNA"/>
</dbReference>
<dbReference type="EMBL" id="AAMC01069451">
    <property type="status" value="NOT_ANNOTATED_CDS"/>
    <property type="molecule type" value="Genomic_DNA"/>
</dbReference>
<dbReference type="EMBL" id="AAMC01069452">
    <property type="status" value="NOT_ANNOTATED_CDS"/>
    <property type="molecule type" value="Genomic_DNA"/>
</dbReference>
<dbReference type="EMBL" id="AAMC01069453">
    <property type="status" value="NOT_ANNOTATED_CDS"/>
    <property type="molecule type" value="Genomic_DNA"/>
</dbReference>
<dbReference type="EMBL" id="AAMC01069454">
    <property type="status" value="NOT_ANNOTATED_CDS"/>
    <property type="molecule type" value="Genomic_DNA"/>
</dbReference>
<dbReference type="EMBL" id="AAMC01069455">
    <property type="status" value="NOT_ANNOTATED_CDS"/>
    <property type="molecule type" value="Genomic_DNA"/>
</dbReference>
<dbReference type="EMBL" id="AAMC01069456">
    <property type="status" value="NOT_ANNOTATED_CDS"/>
    <property type="molecule type" value="Genomic_DNA"/>
</dbReference>
<dbReference type="EMBL" id="AAMC01069457">
    <property type="status" value="NOT_ANNOTATED_CDS"/>
    <property type="molecule type" value="Genomic_DNA"/>
</dbReference>
<dbReference type="EMBL" id="AAMC01069458">
    <property type="status" value="NOT_ANNOTATED_CDS"/>
    <property type="molecule type" value="Genomic_DNA"/>
</dbReference>
<dbReference type="EMBL" id="AAMC01069459">
    <property type="status" value="NOT_ANNOTATED_CDS"/>
    <property type="molecule type" value="Genomic_DNA"/>
</dbReference>
<dbReference type="EMBL" id="AAMC01069460">
    <property type="status" value="NOT_ANNOTATED_CDS"/>
    <property type="molecule type" value="Genomic_DNA"/>
</dbReference>
<dbReference type="EMBL" id="AAMC01069461">
    <property type="status" value="NOT_ANNOTATED_CDS"/>
    <property type="molecule type" value="Genomic_DNA"/>
</dbReference>
<dbReference type="EMBL" id="AAMC01069462">
    <property type="status" value="NOT_ANNOTATED_CDS"/>
    <property type="molecule type" value="Genomic_DNA"/>
</dbReference>
<dbReference type="EMBL" id="AAMC01069463">
    <property type="status" value="NOT_ANNOTATED_CDS"/>
    <property type="molecule type" value="Genomic_DNA"/>
</dbReference>
<dbReference type="EMBL" id="AAMC01069464">
    <property type="status" value="NOT_ANNOTATED_CDS"/>
    <property type="molecule type" value="Genomic_DNA"/>
</dbReference>
<dbReference type="EMBL" id="AAMC01069465">
    <property type="status" value="NOT_ANNOTATED_CDS"/>
    <property type="molecule type" value="Genomic_DNA"/>
</dbReference>
<dbReference type="EMBL" id="AAMC01069466">
    <property type="status" value="NOT_ANNOTATED_CDS"/>
    <property type="molecule type" value="Genomic_DNA"/>
</dbReference>
<dbReference type="EMBL" id="AAMC01069467">
    <property type="status" value="NOT_ANNOTATED_CDS"/>
    <property type="molecule type" value="Genomic_DNA"/>
</dbReference>
<dbReference type="EMBL" id="AAMC01069468">
    <property type="status" value="NOT_ANNOTATED_CDS"/>
    <property type="molecule type" value="Genomic_DNA"/>
</dbReference>
<dbReference type="EMBL" id="AAMC01069469">
    <property type="status" value="NOT_ANNOTATED_CDS"/>
    <property type="molecule type" value="Genomic_DNA"/>
</dbReference>
<dbReference type="EMBL" id="BC121425">
    <property type="protein sequence ID" value="AAI21426.1"/>
    <property type="molecule type" value="mRNA"/>
</dbReference>
<dbReference type="RefSeq" id="NP_001072804.1">
    <property type="nucleotide sequence ID" value="NM_001079336.1"/>
</dbReference>
<dbReference type="RefSeq" id="XP_031757686.1">
    <property type="nucleotide sequence ID" value="XM_031901826.1"/>
</dbReference>
<dbReference type="SMR" id="Q0V9R3"/>
<dbReference type="FunCoup" id="Q0V9R3">
    <property type="interactions" value="2003"/>
</dbReference>
<dbReference type="STRING" id="8364.ENSXETP00000043897"/>
<dbReference type="PaxDb" id="8364-ENSXETP00000062939"/>
<dbReference type="DNASU" id="780265"/>
<dbReference type="GeneID" id="780265"/>
<dbReference type="KEGG" id="xtr:780265"/>
<dbReference type="AGR" id="Xenbase:XB-GENE-5958094"/>
<dbReference type="CTD" id="129563"/>
<dbReference type="Xenbase" id="XB-GENE-5958094">
    <property type="gene designation" value="dis3l2"/>
</dbReference>
<dbReference type="eggNOG" id="KOG2102">
    <property type="taxonomic scope" value="Eukaryota"/>
</dbReference>
<dbReference type="InParanoid" id="Q0V9R3"/>
<dbReference type="OrthoDB" id="372421at2759"/>
<dbReference type="TreeFam" id="TF315191"/>
<dbReference type="Proteomes" id="UP000008143">
    <property type="component" value="Chromosome 5"/>
</dbReference>
<dbReference type="GO" id="GO:0005737">
    <property type="term" value="C:cytoplasm"/>
    <property type="evidence" value="ECO:0000250"/>
    <property type="project" value="UniProtKB"/>
</dbReference>
<dbReference type="GO" id="GO:0000932">
    <property type="term" value="C:P-body"/>
    <property type="evidence" value="ECO:0000250"/>
    <property type="project" value="UniProtKB"/>
</dbReference>
<dbReference type="GO" id="GO:0000175">
    <property type="term" value="F:3'-5'-RNA exonuclease activity"/>
    <property type="evidence" value="ECO:0000250"/>
    <property type="project" value="UniProtKB"/>
</dbReference>
<dbReference type="GO" id="GO:0046872">
    <property type="term" value="F:metal ion binding"/>
    <property type="evidence" value="ECO:0007669"/>
    <property type="project" value="UniProtKB-KW"/>
</dbReference>
<dbReference type="GO" id="GO:0003723">
    <property type="term" value="F:RNA binding"/>
    <property type="evidence" value="ECO:0007669"/>
    <property type="project" value="UniProtKB-KW"/>
</dbReference>
<dbReference type="GO" id="GO:0051301">
    <property type="term" value="P:cell division"/>
    <property type="evidence" value="ECO:0007669"/>
    <property type="project" value="UniProtKB-KW"/>
</dbReference>
<dbReference type="GO" id="GO:0010587">
    <property type="term" value="P:miRNA catabolic process"/>
    <property type="evidence" value="ECO:0000250"/>
    <property type="project" value="UniProtKB"/>
</dbReference>
<dbReference type="GO" id="GO:0000956">
    <property type="term" value="P:nuclear-transcribed mRNA catabolic process"/>
    <property type="evidence" value="ECO:0000250"/>
    <property type="project" value="UniProtKB"/>
</dbReference>
<dbReference type="GO" id="GO:1990074">
    <property type="term" value="P:polyuridylation-dependent mRNA catabolic process"/>
    <property type="evidence" value="ECO:0000250"/>
    <property type="project" value="UniProtKB"/>
</dbReference>
<dbReference type="GO" id="GO:0019827">
    <property type="term" value="P:stem cell population maintenance"/>
    <property type="evidence" value="ECO:0000250"/>
    <property type="project" value="UniProtKB"/>
</dbReference>
<dbReference type="FunFam" id="2.40.50.140:FF:000177">
    <property type="entry name" value="DIS3-like exonuclease 2"/>
    <property type="match status" value="1"/>
</dbReference>
<dbReference type="FunFam" id="2.40.50.690:FF:000003">
    <property type="entry name" value="DIS3-like exonuclease 2"/>
    <property type="match status" value="1"/>
</dbReference>
<dbReference type="FunFam" id="2.40.50.700:FF:000003">
    <property type="entry name" value="DIS3-like exonuclease 2"/>
    <property type="match status" value="1"/>
</dbReference>
<dbReference type="Gene3D" id="2.40.50.690">
    <property type="match status" value="1"/>
</dbReference>
<dbReference type="Gene3D" id="2.40.50.700">
    <property type="match status" value="1"/>
</dbReference>
<dbReference type="Gene3D" id="2.40.50.140">
    <property type="entry name" value="Nucleic acid-binding proteins"/>
    <property type="match status" value="1"/>
</dbReference>
<dbReference type="HAMAP" id="MF_03045">
    <property type="entry name" value="DIS3L2"/>
    <property type="match status" value="1"/>
</dbReference>
<dbReference type="InterPro" id="IPR041505">
    <property type="entry name" value="Dis3_CSD2"/>
</dbReference>
<dbReference type="InterPro" id="IPR028591">
    <property type="entry name" value="DIS3L2"/>
</dbReference>
<dbReference type="InterPro" id="IPR041093">
    <property type="entry name" value="Dis3l2-like_C"/>
</dbReference>
<dbReference type="InterPro" id="IPR012340">
    <property type="entry name" value="NA-bd_OB-fold"/>
</dbReference>
<dbReference type="InterPro" id="IPR001900">
    <property type="entry name" value="RNase_II/R"/>
</dbReference>
<dbReference type="InterPro" id="IPR022966">
    <property type="entry name" value="RNase_II/R_CS"/>
</dbReference>
<dbReference type="InterPro" id="IPR050180">
    <property type="entry name" value="RNR_Ribonuclease"/>
</dbReference>
<dbReference type="InterPro" id="IPR033771">
    <property type="entry name" value="Rrp44_CSD1"/>
</dbReference>
<dbReference type="PANTHER" id="PTHR23355:SF9">
    <property type="entry name" value="DIS3-LIKE EXONUCLEASE 2"/>
    <property type="match status" value="1"/>
</dbReference>
<dbReference type="PANTHER" id="PTHR23355">
    <property type="entry name" value="RIBONUCLEASE"/>
    <property type="match status" value="1"/>
</dbReference>
<dbReference type="Pfam" id="PF17877">
    <property type="entry name" value="Dis3l2_C_term"/>
    <property type="match status" value="1"/>
</dbReference>
<dbReference type="Pfam" id="PF17849">
    <property type="entry name" value="OB_Dis3"/>
    <property type="match status" value="1"/>
</dbReference>
<dbReference type="Pfam" id="PF00773">
    <property type="entry name" value="RNB"/>
    <property type="match status" value="1"/>
</dbReference>
<dbReference type="Pfam" id="PF17216">
    <property type="entry name" value="Rrp44_CSD1"/>
    <property type="match status" value="1"/>
</dbReference>
<dbReference type="SMART" id="SM00955">
    <property type="entry name" value="RNB"/>
    <property type="match status" value="1"/>
</dbReference>
<dbReference type="SUPFAM" id="SSF50249">
    <property type="entry name" value="Nucleic acid-binding proteins"/>
    <property type="match status" value="2"/>
</dbReference>
<dbReference type="PROSITE" id="PS01175">
    <property type="entry name" value="RIBONUCLEASE_II"/>
    <property type="match status" value="1"/>
</dbReference>